<sequence length="371" mass="42657">MVCKHFGSCGSCALYNQNYTQQLQLKEQRVSELLSPFYTGELELFDSPDSRYRARAEFRIWHESERCDYAMGNIEKKGAVTIEECPKVIEPIEKRMWKLLEKINASQEVLKQRLFAVEFLATTTDECLVTMLYHRKLDEAWSEEAKMLERELNCRVMGRSRKQKVILSDEFVTETLEIDGKEFTYVQYESGFTQPNPAVNVKMIEWAIWQAKKVGYGDFLESYCGLGNFTLPLSHYFDNVLATEISKRSIHAALQNCELNAVENITFARLASEEMTEALNGVREFSRLKGIDLKSYDFSTVLVDPPRAGLDEGTIELISNIDNIIYISCNPETLARDLETLIKTHTVMEAALFDQFPHTEHVESGVFLQKK</sequence>
<organism>
    <name type="scientific">Sulfurovum sp. (strain NBC37-1)</name>
    <dbReference type="NCBI Taxonomy" id="387093"/>
    <lineage>
        <taxon>Bacteria</taxon>
        <taxon>Pseudomonadati</taxon>
        <taxon>Campylobacterota</taxon>
        <taxon>Epsilonproteobacteria</taxon>
        <taxon>Campylobacterales</taxon>
        <taxon>Sulfurovaceae</taxon>
        <taxon>Sulfurovum</taxon>
    </lineage>
</organism>
<evidence type="ECO:0000255" key="1">
    <source>
        <dbReference type="HAMAP-Rule" id="MF_01011"/>
    </source>
</evidence>
<feature type="chain" id="PRO_0000319447" description="tRNA/tmRNA (uracil-C(5))-methyltransferase">
    <location>
        <begin position="1"/>
        <end position="371"/>
    </location>
</feature>
<feature type="active site" description="Nucleophile" evidence="1">
    <location>
        <position position="329"/>
    </location>
</feature>
<feature type="active site" description="Proton acceptor" evidence="1">
    <location>
        <position position="363"/>
    </location>
</feature>
<feature type="binding site" evidence="1">
    <location>
        <position position="194"/>
    </location>
    <ligand>
        <name>S-adenosyl-L-methionine</name>
        <dbReference type="ChEBI" id="CHEBI:59789"/>
    </ligand>
</feature>
<feature type="binding site" evidence="1">
    <location>
        <position position="223"/>
    </location>
    <ligand>
        <name>S-adenosyl-L-methionine</name>
        <dbReference type="ChEBI" id="CHEBI:59789"/>
    </ligand>
</feature>
<feature type="binding site" evidence="1">
    <location>
        <position position="228"/>
    </location>
    <ligand>
        <name>S-adenosyl-L-methionine</name>
        <dbReference type="ChEBI" id="CHEBI:59789"/>
    </ligand>
</feature>
<feature type="binding site" evidence="1">
    <location>
        <position position="244"/>
    </location>
    <ligand>
        <name>S-adenosyl-L-methionine</name>
        <dbReference type="ChEBI" id="CHEBI:59789"/>
    </ligand>
</feature>
<feature type="binding site" evidence="1">
    <location>
        <position position="304"/>
    </location>
    <ligand>
        <name>S-adenosyl-L-methionine</name>
        <dbReference type="ChEBI" id="CHEBI:59789"/>
    </ligand>
</feature>
<reference key="1">
    <citation type="journal article" date="2007" name="Proc. Natl. Acad. Sci. U.S.A.">
        <title>Deep-sea vent epsilon-proteobacterial genomes provide insights into emergence of pathogens.</title>
        <authorList>
            <person name="Nakagawa S."/>
            <person name="Takaki Y."/>
            <person name="Shimamura S."/>
            <person name="Reysenbach A.-L."/>
            <person name="Takai K."/>
            <person name="Horikoshi K."/>
        </authorList>
    </citation>
    <scope>NUCLEOTIDE SEQUENCE [LARGE SCALE GENOMIC DNA]</scope>
    <source>
        <strain>NBC37-1</strain>
    </source>
</reference>
<comment type="function">
    <text evidence="1">Dual-specificity methyltransferase that catalyzes the formation of 5-methyluridine at position 54 (m5U54) in all tRNAs, and that of position 341 (m5U341) in tmRNA (transfer-mRNA).</text>
</comment>
<comment type="catalytic activity">
    <reaction evidence="1">
        <text>uridine(54) in tRNA + S-adenosyl-L-methionine = 5-methyluridine(54) in tRNA + S-adenosyl-L-homocysteine + H(+)</text>
        <dbReference type="Rhea" id="RHEA:42712"/>
        <dbReference type="Rhea" id="RHEA-COMP:10167"/>
        <dbReference type="Rhea" id="RHEA-COMP:10193"/>
        <dbReference type="ChEBI" id="CHEBI:15378"/>
        <dbReference type="ChEBI" id="CHEBI:57856"/>
        <dbReference type="ChEBI" id="CHEBI:59789"/>
        <dbReference type="ChEBI" id="CHEBI:65315"/>
        <dbReference type="ChEBI" id="CHEBI:74447"/>
        <dbReference type="EC" id="2.1.1.35"/>
    </reaction>
</comment>
<comment type="catalytic activity">
    <reaction evidence="1">
        <text>uridine(341) in tmRNA + S-adenosyl-L-methionine = 5-methyluridine(341) in tmRNA + S-adenosyl-L-homocysteine + H(+)</text>
        <dbReference type="Rhea" id="RHEA:43612"/>
        <dbReference type="Rhea" id="RHEA-COMP:10630"/>
        <dbReference type="Rhea" id="RHEA-COMP:10631"/>
        <dbReference type="ChEBI" id="CHEBI:15378"/>
        <dbReference type="ChEBI" id="CHEBI:57856"/>
        <dbReference type="ChEBI" id="CHEBI:59789"/>
        <dbReference type="ChEBI" id="CHEBI:65315"/>
        <dbReference type="ChEBI" id="CHEBI:74447"/>
    </reaction>
</comment>
<comment type="similarity">
    <text evidence="1">Belongs to the class I-like SAM-binding methyltransferase superfamily. RNA M5U methyltransferase family. TrmA subfamily.</text>
</comment>
<proteinExistence type="inferred from homology"/>
<keyword id="KW-0489">Methyltransferase</keyword>
<keyword id="KW-0949">S-adenosyl-L-methionine</keyword>
<keyword id="KW-0808">Transferase</keyword>
<keyword id="KW-0819">tRNA processing</keyword>
<dbReference type="EC" id="2.1.1.-" evidence="1"/>
<dbReference type="EC" id="2.1.1.35" evidence="1"/>
<dbReference type="EMBL" id="AP009179">
    <property type="protein sequence ID" value="BAF72779.1"/>
    <property type="molecule type" value="Genomic_DNA"/>
</dbReference>
<dbReference type="RefSeq" id="WP_012083592.1">
    <property type="nucleotide sequence ID" value="NC_009663.1"/>
</dbReference>
<dbReference type="SMR" id="A6QBC0"/>
<dbReference type="STRING" id="387093.SUN_1832"/>
<dbReference type="KEGG" id="sun:SUN_1832"/>
<dbReference type="eggNOG" id="COG2265">
    <property type="taxonomic scope" value="Bacteria"/>
</dbReference>
<dbReference type="HOGENOM" id="CLU_043022_0_0_7"/>
<dbReference type="OrthoDB" id="9804590at2"/>
<dbReference type="Proteomes" id="UP000006378">
    <property type="component" value="Chromosome"/>
</dbReference>
<dbReference type="GO" id="GO:0005829">
    <property type="term" value="C:cytosol"/>
    <property type="evidence" value="ECO:0007669"/>
    <property type="project" value="TreeGrafter"/>
</dbReference>
<dbReference type="GO" id="GO:0019843">
    <property type="term" value="F:rRNA binding"/>
    <property type="evidence" value="ECO:0007669"/>
    <property type="project" value="TreeGrafter"/>
</dbReference>
<dbReference type="GO" id="GO:0030697">
    <property type="term" value="F:tRNA (uracil(54)-C5)-methyltransferase activity, S-adenosyl methionine-dependent"/>
    <property type="evidence" value="ECO:0007669"/>
    <property type="project" value="UniProtKB-EC"/>
</dbReference>
<dbReference type="GO" id="GO:0000049">
    <property type="term" value="F:tRNA binding"/>
    <property type="evidence" value="ECO:0007669"/>
    <property type="project" value="TreeGrafter"/>
</dbReference>
<dbReference type="GO" id="GO:0032259">
    <property type="term" value="P:methylation"/>
    <property type="evidence" value="ECO:0007669"/>
    <property type="project" value="UniProtKB-KW"/>
</dbReference>
<dbReference type="GO" id="GO:0009451">
    <property type="term" value="P:RNA modification"/>
    <property type="evidence" value="ECO:0007669"/>
    <property type="project" value="UniProtKB-ARBA"/>
</dbReference>
<dbReference type="GO" id="GO:0008033">
    <property type="term" value="P:tRNA processing"/>
    <property type="evidence" value="ECO:0007669"/>
    <property type="project" value="UniProtKB-KW"/>
</dbReference>
<dbReference type="CDD" id="cd02440">
    <property type="entry name" value="AdoMet_MTases"/>
    <property type="match status" value="1"/>
</dbReference>
<dbReference type="FunFam" id="3.40.50.150:FF:000012">
    <property type="entry name" value="tRNA/tmRNA (uracil-C(5))-methyltransferase"/>
    <property type="match status" value="1"/>
</dbReference>
<dbReference type="Gene3D" id="2.40.50.1070">
    <property type="match status" value="1"/>
</dbReference>
<dbReference type="Gene3D" id="3.40.50.150">
    <property type="entry name" value="Vaccinia Virus protein VP39"/>
    <property type="match status" value="1"/>
</dbReference>
<dbReference type="HAMAP" id="MF_01011">
    <property type="entry name" value="RNA_methyltr_TrmA"/>
    <property type="match status" value="1"/>
</dbReference>
<dbReference type="InterPro" id="IPR030390">
    <property type="entry name" value="MeTrfase_TrmA_AS"/>
</dbReference>
<dbReference type="InterPro" id="IPR030391">
    <property type="entry name" value="MeTrfase_TrmA_CS"/>
</dbReference>
<dbReference type="InterPro" id="IPR029063">
    <property type="entry name" value="SAM-dependent_MTases_sf"/>
</dbReference>
<dbReference type="InterPro" id="IPR011869">
    <property type="entry name" value="TrmA_MeTrfase"/>
</dbReference>
<dbReference type="InterPro" id="IPR010280">
    <property type="entry name" value="U5_MeTrfase_fam"/>
</dbReference>
<dbReference type="NCBIfam" id="TIGR02143">
    <property type="entry name" value="trmA_only"/>
    <property type="match status" value="1"/>
</dbReference>
<dbReference type="PANTHER" id="PTHR47790">
    <property type="entry name" value="TRNA/TMRNA (URACIL-C(5))-METHYLTRANSFERASE"/>
    <property type="match status" value="1"/>
</dbReference>
<dbReference type="PANTHER" id="PTHR47790:SF2">
    <property type="entry name" value="TRNA_TMRNA (URACIL-C(5))-METHYLTRANSFERASE"/>
    <property type="match status" value="1"/>
</dbReference>
<dbReference type="Pfam" id="PF05958">
    <property type="entry name" value="tRNA_U5-meth_tr"/>
    <property type="match status" value="1"/>
</dbReference>
<dbReference type="SUPFAM" id="SSF53335">
    <property type="entry name" value="S-adenosyl-L-methionine-dependent methyltransferases"/>
    <property type="match status" value="1"/>
</dbReference>
<dbReference type="PROSITE" id="PS51687">
    <property type="entry name" value="SAM_MT_RNA_M5U"/>
    <property type="match status" value="1"/>
</dbReference>
<dbReference type="PROSITE" id="PS01230">
    <property type="entry name" value="TRMA_1"/>
    <property type="match status" value="1"/>
</dbReference>
<dbReference type="PROSITE" id="PS01231">
    <property type="entry name" value="TRMA_2"/>
    <property type="match status" value="1"/>
</dbReference>
<accession>A6QBC0</accession>
<gene>
    <name evidence="1" type="primary">trmA</name>
    <name type="ordered locus">SUN_1832</name>
</gene>
<name>TRMA_SULNB</name>
<protein>
    <recommendedName>
        <fullName evidence="1">tRNA/tmRNA (uracil-C(5))-methyltransferase</fullName>
        <ecNumber evidence="1">2.1.1.-</ecNumber>
        <ecNumber evidence="1">2.1.1.35</ecNumber>
    </recommendedName>
    <alternativeName>
        <fullName evidence="1">tRNA (uracil(54)-C(5))-methyltransferase</fullName>
    </alternativeName>
    <alternativeName>
        <fullName evidence="1">tRNA(m5U54)-methyltransferase</fullName>
        <shortName evidence="1">RUMT</shortName>
    </alternativeName>
    <alternativeName>
        <fullName evidence="1">tmRNA (uracil(341)-C(5))-methyltransferase</fullName>
    </alternativeName>
</protein>